<organism>
    <name type="scientific">Mus musculus</name>
    <name type="common">Mouse</name>
    <dbReference type="NCBI Taxonomy" id="10090"/>
    <lineage>
        <taxon>Eukaryota</taxon>
        <taxon>Metazoa</taxon>
        <taxon>Chordata</taxon>
        <taxon>Craniata</taxon>
        <taxon>Vertebrata</taxon>
        <taxon>Euteleostomi</taxon>
        <taxon>Mammalia</taxon>
        <taxon>Eutheria</taxon>
        <taxon>Euarchontoglires</taxon>
        <taxon>Glires</taxon>
        <taxon>Rodentia</taxon>
        <taxon>Myomorpha</taxon>
        <taxon>Muroidea</taxon>
        <taxon>Muridae</taxon>
        <taxon>Murinae</taxon>
        <taxon>Mus</taxon>
        <taxon>Mus</taxon>
    </lineage>
</organism>
<name>UBA1_MOUSE</name>
<proteinExistence type="evidence at protein level"/>
<gene>
    <name type="primary">Uba1</name>
    <name type="synonym">Sbx</name>
    <name type="synonym">Ube1</name>
    <name type="synonym">Ube1ax</name>
    <name type="synonym">Ube1x</name>
</gene>
<sequence>MSSSPLSKKRRVSGPDPKPGSNCSPAQSALSEVSSVPTNGMAKNGSEADIDESLYSRQLYVLGHEAMKMLQTSSVLVSGLRGLGVEIAKNIILGGVKAVTLHDQGTTQWADLSSQFYLREEDIGKNRAEVSQPRLAELNSYVPVTAYTGPLVEDFLSSFQVVVLTNSPLEAQLRVGEFCHSRGIKLVVADTRGLFGQLFCDFGEEMVLTDSNGEQPLSAMVSMVTKDNPGVVTCLDEARHGFETGDFVSFSEVQGMIQLNGCQPMEIKVLGPYTFSICDTSNFSDYIRGGIVSQVKVPKKISFKSLPASLVEPDFVMTDFAKYSRPAQLHIGFQALHQFCALHNQPPRPRNEEDATELVGLAQAVNARSPPSVKQNSLDEDLIRKLAYVAAGDLAPINAFIGGLAAQEVMKACSGKFMPIMQWLYFDALECLPEDKEALTEEKCLPRQNRYDGQVAVFGSDFQEKLSKQKYFLVGAGAIGCELLKNFAMIGLGCGEGGEVVVTDMDTIEKSNLNRQFLFRPWDVTKLKSDTAAAAVRQMNPYIQVTSHQNRVGPDTERIYDDDFFQNLDGVANALDNIDARMYMDRRCVYYRKPLLESGTLGTKGNVQVVIPFLTESYSSSQDPPEKSIPICTLKNFPNAIEHTLQWARDEFEGLFKQPAENVNQYLTDSKFVERTLRLAGTQPLEVLEAVQRSLVLQRPQTWGDCVTWACHHWHTQYCNNIRQLLHNFPPDQLTSSGAPFWSGPKRCPHPLTFDVNNTLHLDYVMAAANLFAQTYGLTGSQDRAAVASLLQSVQVPEFTPKSGVKIHVSDQELQSANASVDDSRLEELKATLPSPDKLPGFKMYPIDFEKDDDSNFHMDFIVAASNLRAENYDISPADRHKSKLIAGKIIPAIATTTAAVVGLVCLELYKVVQGHQQLDSYKNGFLNLALPFFGFSEPLAAPRHQYYNQEWTLWDRFEVQGLQPNGEEMTLKQFLDYFKTEHKLEITMLSQGVSMLYSFFMPAAKLKERLDQPMTEIVSRVSKRKLGRHVRALVLELCCNDESGEDVEVPYVRYTIR</sequence>
<evidence type="ECO:0000250" key="1">
    <source>
        <dbReference type="UniProtKB" id="P22314"/>
    </source>
</evidence>
<evidence type="ECO:0000250" key="2">
    <source>
        <dbReference type="UniProtKB" id="P22515"/>
    </source>
</evidence>
<evidence type="ECO:0000255" key="3">
    <source>
        <dbReference type="PROSITE-ProRule" id="PRU10132"/>
    </source>
</evidence>
<evidence type="ECO:0000256" key="4">
    <source>
        <dbReference type="SAM" id="MobiDB-lite"/>
    </source>
</evidence>
<evidence type="ECO:0000269" key="5">
    <source>
    </source>
</evidence>
<evidence type="ECO:0000269" key="6">
    <source>
    </source>
</evidence>
<evidence type="ECO:0000305" key="7"/>
<evidence type="ECO:0000305" key="8">
    <source>
    </source>
</evidence>
<evidence type="ECO:0007744" key="9">
    <source>
    </source>
</evidence>
<evidence type="ECO:0007744" key="10">
    <source>
    </source>
</evidence>
<evidence type="ECO:0007744" key="11">
    <source>
    </source>
</evidence>
<evidence type="ECO:0007744" key="12">
    <source>
    </source>
</evidence>
<evidence type="ECO:0007829" key="13">
    <source>
        <dbReference type="PDB" id="1Z7L"/>
    </source>
</evidence>
<evidence type="ECO:0007829" key="14">
    <source>
        <dbReference type="PDB" id="2LZJ"/>
    </source>
</evidence>
<dbReference type="EC" id="6.2.1.45" evidence="1"/>
<dbReference type="EMBL" id="D10576">
    <property type="protein sequence ID" value="BAA01433.1"/>
    <property type="molecule type" value="mRNA"/>
</dbReference>
<dbReference type="EMBL" id="AK088057">
    <property type="protein sequence ID" value="BAC40121.1"/>
    <property type="molecule type" value="mRNA"/>
</dbReference>
<dbReference type="EMBL" id="AK088528">
    <property type="protein sequence ID" value="BAC40405.1"/>
    <property type="molecule type" value="mRNA"/>
</dbReference>
<dbReference type="EMBL" id="AK143416">
    <property type="protein sequence ID" value="BAE25369.1"/>
    <property type="molecule type" value="mRNA"/>
</dbReference>
<dbReference type="EMBL" id="AK171667">
    <property type="protein sequence ID" value="BAE42599.1"/>
    <property type="molecule type" value="mRNA"/>
</dbReference>
<dbReference type="EMBL" id="AL807240">
    <property type="status" value="NOT_ANNOTATED_CDS"/>
    <property type="molecule type" value="Genomic_DNA"/>
</dbReference>
<dbReference type="EMBL" id="BC058630">
    <property type="protein sequence ID" value="AAH58630.1"/>
    <property type="molecule type" value="mRNA"/>
</dbReference>
<dbReference type="EMBL" id="BC145984">
    <property type="protein sequence ID" value="AAI45985.1"/>
    <property type="molecule type" value="mRNA"/>
</dbReference>
<dbReference type="EMBL" id="X62580">
    <property type="protein sequence ID" value="CAA44465.1"/>
    <property type="status" value="ALT_FRAME"/>
    <property type="molecule type" value="mRNA"/>
</dbReference>
<dbReference type="EMBL" id="U09051">
    <property type="protein sequence ID" value="AAC52169.1"/>
    <property type="molecule type" value="Genomic_DNA"/>
</dbReference>
<dbReference type="EMBL" id="U09055">
    <property type="protein sequence ID" value="AAC52171.1"/>
    <property type="molecule type" value="Genomic_DNA"/>
</dbReference>
<dbReference type="CCDS" id="CCDS30044.1"/>
<dbReference type="PIR" id="I48756">
    <property type="entry name" value="I48756"/>
</dbReference>
<dbReference type="PIR" id="I63168">
    <property type="entry name" value="I63168"/>
</dbReference>
<dbReference type="PIR" id="JC1254">
    <property type="entry name" value="JC1254"/>
</dbReference>
<dbReference type="RefSeq" id="NP_001129557.1">
    <property type="nucleotide sequence ID" value="NM_001136085.3"/>
</dbReference>
<dbReference type="RefSeq" id="NP_001263245.1">
    <property type="nucleotide sequence ID" value="NM_001276316.2"/>
</dbReference>
<dbReference type="RefSeq" id="NP_001263246.1">
    <property type="nucleotide sequence ID" value="NM_001276317.2"/>
</dbReference>
<dbReference type="RefSeq" id="NP_033483.3">
    <property type="nucleotide sequence ID" value="NM_009457.5"/>
</dbReference>
<dbReference type="RefSeq" id="XP_030107162.1">
    <property type="nucleotide sequence ID" value="XM_030251302.1"/>
</dbReference>
<dbReference type="PDB" id="1Z7L">
    <property type="method" value="X-ray"/>
    <property type="resolution" value="2.80 A"/>
    <property type="chains" value="A/B/C=626-891"/>
</dbReference>
<dbReference type="PDB" id="2LZJ">
    <property type="method" value="NMR"/>
    <property type="chains" value="A=202-312"/>
</dbReference>
<dbReference type="PDB" id="2V31">
    <property type="method" value="NMR"/>
    <property type="chains" value="A=202-312"/>
</dbReference>
<dbReference type="PDBsum" id="1Z7L"/>
<dbReference type="PDBsum" id="2LZJ"/>
<dbReference type="PDBsum" id="2V31"/>
<dbReference type="BMRB" id="Q02053"/>
<dbReference type="SMR" id="Q02053"/>
<dbReference type="BioGRID" id="204410">
    <property type="interactions" value="65"/>
</dbReference>
<dbReference type="ELM" id="Q02053"/>
<dbReference type="FunCoup" id="Q02053">
    <property type="interactions" value="4481"/>
</dbReference>
<dbReference type="IntAct" id="Q02053">
    <property type="interactions" value="9"/>
</dbReference>
<dbReference type="MINT" id="Q02053"/>
<dbReference type="STRING" id="10090.ENSMUSP00000001989"/>
<dbReference type="BindingDB" id="Q02053"/>
<dbReference type="ChEMBL" id="CHEMBL5169143"/>
<dbReference type="GlyGen" id="Q02053">
    <property type="glycosylation" value="2 sites, 1 N-linked glycan (1 site), 1 O-linked glycan (1 site)"/>
</dbReference>
<dbReference type="iPTMnet" id="Q02053"/>
<dbReference type="MetOSite" id="Q02053"/>
<dbReference type="PhosphoSitePlus" id="Q02053"/>
<dbReference type="SwissPalm" id="Q02053"/>
<dbReference type="jPOST" id="Q02053"/>
<dbReference type="PaxDb" id="10090-ENSMUSP00000001989"/>
<dbReference type="ProteomicsDB" id="298351"/>
<dbReference type="Pumba" id="Q02053"/>
<dbReference type="Antibodypedia" id="345">
    <property type="antibodies" value="418 antibodies from 40 providers"/>
</dbReference>
<dbReference type="DNASU" id="22201"/>
<dbReference type="Ensembl" id="ENSMUST00000001989.9">
    <property type="protein sequence ID" value="ENSMUSP00000001989.9"/>
    <property type="gene ID" value="ENSMUSG00000001924.16"/>
</dbReference>
<dbReference type="Ensembl" id="ENSMUST00000089217.11">
    <property type="protein sequence ID" value="ENSMUSP00000086626.5"/>
    <property type="gene ID" value="ENSMUSG00000001924.16"/>
</dbReference>
<dbReference type="GeneID" id="22201"/>
<dbReference type="KEGG" id="mmu:22201"/>
<dbReference type="UCSC" id="uc009stl.2">
    <property type="organism name" value="mouse"/>
</dbReference>
<dbReference type="AGR" id="MGI:98890"/>
<dbReference type="CTD" id="7317"/>
<dbReference type="MGI" id="MGI:98890">
    <property type="gene designation" value="Uba1"/>
</dbReference>
<dbReference type="VEuPathDB" id="HostDB:ENSMUSG00000001924"/>
<dbReference type="eggNOG" id="KOG2012">
    <property type="taxonomic scope" value="Eukaryota"/>
</dbReference>
<dbReference type="GeneTree" id="ENSGT00940000158975"/>
<dbReference type="HOGENOM" id="CLU_002556_0_0_1"/>
<dbReference type="InParanoid" id="Q02053"/>
<dbReference type="OMA" id="GANLHAF"/>
<dbReference type="OrthoDB" id="10252231at2759"/>
<dbReference type="PhylomeDB" id="Q02053"/>
<dbReference type="TreeFam" id="TF300586"/>
<dbReference type="BRENDA" id="6.2.1.45">
    <property type="organism ID" value="3474"/>
</dbReference>
<dbReference type="Reactome" id="R-MMU-8866652">
    <property type="pathway name" value="Synthesis of active ubiquitin: roles of E1 and E2 enzymes"/>
</dbReference>
<dbReference type="Reactome" id="R-MMU-983168">
    <property type="pathway name" value="Antigen processing: Ubiquitination &amp; Proteasome degradation"/>
</dbReference>
<dbReference type="UniPathway" id="UPA00143"/>
<dbReference type="BioGRID-ORCS" id="22201">
    <property type="hits" value="31 hits in 77 CRISPR screens"/>
</dbReference>
<dbReference type="CD-CODE" id="CE726F99">
    <property type="entry name" value="Postsynaptic density"/>
</dbReference>
<dbReference type="ChiTaRS" id="Uba1">
    <property type="organism name" value="mouse"/>
</dbReference>
<dbReference type="EvolutionaryTrace" id="Q02053"/>
<dbReference type="PRO" id="PR:Q02053"/>
<dbReference type="Proteomes" id="UP000000589">
    <property type="component" value="Chromosome X"/>
</dbReference>
<dbReference type="RNAct" id="Q02053">
    <property type="molecule type" value="protein"/>
</dbReference>
<dbReference type="Bgee" id="ENSMUSG00000001924">
    <property type="expression patterns" value="Expressed in cortical plate and 271 other cell types or tissues"/>
</dbReference>
<dbReference type="ExpressionAtlas" id="Q02053">
    <property type="expression patterns" value="baseline and differential"/>
</dbReference>
<dbReference type="GO" id="GO:0005737">
    <property type="term" value="C:cytoplasm"/>
    <property type="evidence" value="ECO:0000250"/>
    <property type="project" value="UniProtKB"/>
</dbReference>
<dbReference type="GO" id="GO:0005829">
    <property type="term" value="C:cytosol"/>
    <property type="evidence" value="ECO:0007669"/>
    <property type="project" value="Ensembl"/>
</dbReference>
<dbReference type="GO" id="GO:0030057">
    <property type="term" value="C:desmosome"/>
    <property type="evidence" value="ECO:0007669"/>
    <property type="project" value="Ensembl"/>
</dbReference>
<dbReference type="GO" id="GO:0010008">
    <property type="term" value="C:endosome membrane"/>
    <property type="evidence" value="ECO:0007669"/>
    <property type="project" value="Ensembl"/>
</dbReference>
<dbReference type="GO" id="GO:0000792">
    <property type="term" value="C:heterochromatin"/>
    <property type="evidence" value="ECO:0007669"/>
    <property type="project" value="Ensembl"/>
</dbReference>
<dbReference type="GO" id="GO:0005765">
    <property type="term" value="C:lysosomal membrane"/>
    <property type="evidence" value="ECO:0007669"/>
    <property type="project" value="Ensembl"/>
</dbReference>
<dbReference type="GO" id="GO:0005739">
    <property type="term" value="C:mitochondrion"/>
    <property type="evidence" value="ECO:0000250"/>
    <property type="project" value="UniProtKB"/>
</dbReference>
<dbReference type="GO" id="GO:0005654">
    <property type="term" value="C:nucleoplasm"/>
    <property type="evidence" value="ECO:0007669"/>
    <property type="project" value="Ensembl"/>
</dbReference>
<dbReference type="GO" id="GO:0005634">
    <property type="term" value="C:nucleus"/>
    <property type="evidence" value="ECO:0000250"/>
    <property type="project" value="UniProtKB"/>
</dbReference>
<dbReference type="GO" id="GO:0030867">
    <property type="term" value="C:rough endoplasmic reticulum membrane"/>
    <property type="evidence" value="ECO:0007669"/>
    <property type="project" value="Ensembl"/>
</dbReference>
<dbReference type="GO" id="GO:0005524">
    <property type="term" value="F:ATP binding"/>
    <property type="evidence" value="ECO:0007669"/>
    <property type="project" value="UniProtKB-KW"/>
</dbReference>
<dbReference type="GO" id="GO:0004839">
    <property type="term" value="F:ubiquitin activating enzyme activity"/>
    <property type="evidence" value="ECO:0000314"/>
    <property type="project" value="MGI"/>
</dbReference>
<dbReference type="GO" id="GO:0006974">
    <property type="term" value="P:DNA damage response"/>
    <property type="evidence" value="ECO:0007669"/>
    <property type="project" value="Ensembl"/>
</dbReference>
<dbReference type="CDD" id="cd01491">
    <property type="entry name" value="Ube1_repeat1"/>
    <property type="match status" value="1"/>
</dbReference>
<dbReference type="CDD" id="cd01490">
    <property type="entry name" value="Ube1_repeat2"/>
    <property type="match status" value="1"/>
</dbReference>
<dbReference type="FunFam" id="1.10.10.2660:FF:000001">
    <property type="entry name" value="Ubiquitin-activating enzyme E1 1"/>
    <property type="match status" value="1"/>
</dbReference>
<dbReference type="FunFam" id="3.40.50.12550:FF:000001">
    <property type="entry name" value="Ubiquitin-activating enzyme E1 1"/>
    <property type="match status" value="1"/>
</dbReference>
<dbReference type="FunFam" id="3.40.50.720:FF:000015">
    <property type="entry name" value="Ubiquitin-activating enzyme E1 1"/>
    <property type="match status" value="1"/>
</dbReference>
<dbReference type="FunFam" id="3.10.290.60:FF:000002">
    <property type="entry name" value="Ubiquitin-like modifier-activating enzyme 1"/>
    <property type="match status" value="1"/>
</dbReference>
<dbReference type="FunFam" id="2.40.30.180:FF:000001">
    <property type="entry name" value="ubiquitin-like modifier-activating enzyme 1"/>
    <property type="match status" value="1"/>
</dbReference>
<dbReference type="FunFam" id="3.50.50.80:FF:000001">
    <property type="entry name" value="ubiquitin-like modifier-activating enzyme 1"/>
    <property type="match status" value="1"/>
</dbReference>
<dbReference type="Gene3D" id="3.40.50.720">
    <property type="entry name" value="NAD(P)-binding Rossmann-like Domain"/>
    <property type="match status" value="1"/>
</dbReference>
<dbReference type="Gene3D" id="2.40.30.180">
    <property type="entry name" value="Ubiquitin-activating enzyme E1, FCCH domain"/>
    <property type="match status" value="1"/>
</dbReference>
<dbReference type="Gene3D" id="3.50.50.80">
    <property type="entry name" value="Ubiquitin-activating enzyme E1, inactive adenylation domain, subdomain 1"/>
    <property type="match status" value="1"/>
</dbReference>
<dbReference type="Gene3D" id="3.40.50.12550">
    <property type="entry name" value="Ubiquitin-activating enzyme E1, inactive adenylation domain, subdomain 2"/>
    <property type="match status" value="1"/>
</dbReference>
<dbReference type="Gene3D" id="1.10.10.2660">
    <property type="entry name" value="Ubiquitin-activating enzyme E1, SCCH domain"/>
    <property type="match status" value="1"/>
</dbReference>
<dbReference type="Gene3D" id="3.10.290.60">
    <property type="entry name" value="Ubiquitin-activating enzyme E1, UFD domain"/>
    <property type="match status" value="1"/>
</dbReference>
<dbReference type="InterPro" id="IPR032420">
    <property type="entry name" value="E1_4HB"/>
</dbReference>
<dbReference type="InterPro" id="IPR032418">
    <property type="entry name" value="E1_FCCH"/>
</dbReference>
<dbReference type="InterPro" id="IPR042302">
    <property type="entry name" value="E1_FCCH_sf"/>
</dbReference>
<dbReference type="InterPro" id="IPR045886">
    <property type="entry name" value="ThiF/MoeB/HesA"/>
</dbReference>
<dbReference type="InterPro" id="IPR000594">
    <property type="entry name" value="ThiF_NAD_FAD-bd"/>
</dbReference>
<dbReference type="InterPro" id="IPR018965">
    <property type="entry name" value="Ub-activating_enz_E1_C"/>
</dbReference>
<dbReference type="InterPro" id="IPR042449">
    <property type="entry name" value="Ub-E1_IAD_1"/>
</dbReference>
<dbReference type="InterPro" id="IPR038252">
    <property type="entry name" value="UBA_E1_C_sf"/>
</dbReference>
<dbReference type="InterPro" id="IPR019572">
    <property type="entry name" value="UBA_E1_SCCH"/>
</dbReference>
<dbReference type="InterPro" id="IPR042063">
    <property type="entry name" value="Ubi_acti_E1_SCCH"/>
</dbReference>
<dbReference type="InterPro" id="IPR035985">
    <property type="entry name" value="Ubiquitin-activating_enz"/>
</dbReference>
<dbReference type="InterPro" id="IPR018075">
    <property type="entry name" value="UBQ-activ_enz_E1"/>
</dbReference>
<dbReference type="InterPro" id="IPR018074">
    <property type="entry name" value="UBQ-activ_enz_E1_CS"/>
</dbReference>
<dbReference type="InterPro" id="IPR033127">
    <property type="entry name" value="UBQ-activ_enz_E1_Cys_AS"/>
</dbReference>
<dbReference type="InterPro" id="IPR000011">
    <property type="entry name" value="UBQ/SUMO-activ_enz_E1-like"/>
</dbReference>
<dbReference type="NCBIfam" id="TIGR01408">
    <property type="entry name" value="Ube1"/>
    <property type="match status" value="1"/>
</dbReference>
<dbReference type="PANTHER" id="PTHR10953">
    <property type="entry name" value="UBIQUITIN-ACTIVATING ENZYME E1"/>
    <property type="match status" value="1"/>
</dbReference>
<dbReference type="PANTHER" id="PTHR10953:SF155">
    <property type="entry name" value="UBIQUITIN-LIKE MODIFIER-ACTIVATING ENZYME 1"/>
    <property type="match status" value="1"/>
</dbReference>
<dbReference type="Pfam" id="PF16191">
    <property type="entry name" value="E1_4HB"/>
    <property type="match status" value="1"/>
</dbReference>
<dbReference type="Pfam" id="PF16190">
    <property type="entry name" value="E1_FCCH"/>
    <property type="match status" value="1"/>
</dbReference>
<dbReference type="Pfam" id="PF09358">
    <property type="entry name" value="E1_UFD"/>
    <property type="match status" value="1"/>
</dbReference>
<dbReference type="Pfam" id="PF00899">
    <property type="entry name" value="ThiF"/>
    <property type="match status" value="2"/>
</dbReference>
<dbReference type="Pfam" id="PF10585">
    <property type="entry name" value="UBA_E1_SCCH"/>
    <property type="match status" value="1"/>
</dbReference>
<dbReference type="PRINTS" id="PR01849">
    <property type="entry name" value="UBIQUITINACT"/>
</dbReference>
<dbReference type="SMART" id="SM00985">
    <property type="entry name" value="UBA_e1_C"/>
    <property type="match status" value="1"/>
</dbReference>
<dbReference type="SUPFAM" id="SSF69572">
    <property type="entry name" value="Activating enzymes of the ubiquitin-like proteins"/>
    <property type="match status" value="2"/>
</dbReference>
<dbReference type="PROSITE" id="PS00536">
    <property type="entry name" value="UBIQUITIN_ACTIVAT_1"/>
    <property type="match status" value="1"/>
</dbReference>
<dbReference type="PROSITE" id="PS00865">
    <property type="entry name" value="UBIQUITIN_ACTIVAT_2"/>
    <property type="match status" value="1"/>
</dbReference>
<accession>Q02053</accession>
<accession>A6H6S6</accession>
<accession>P31253</accession>
<accession>Q542H8</accession>
<keyword id="KW-0002">3D-structure</keyword>
<keyword id="KW-0007">Acetylation</keyword>
<keyword id="KW-0067">ATP-binding</keyword>
<keyword id="KW-0963">Cytoplasm</keyword>
<keyword id="KW-0903">Direct protein sequencing</keyword>
<keyword id="KW-0436">Ligase</keyword>
<keyword id="KW-0496">Mitochondrion</keyword>
<keyword id="KW-0547">Nucleotide-binding</keyword>
<keyword id="KW-0539">Nucleus</keyword>
<keyword id="KW-0597">Phosphoprotein</keyword>
<keyword id="KW-1185">Reference proteome</keyword>
<keyword id="KW-0677">Repeat</keyword>
<keyword id="KW-0832">Ubl conjugation</keyword>
<keyword id="KW-0833">Ubl conjugation pathway</keyword>
<protein>
    <recommendedName>
        <fullName>Ubiquitin-like modifier-activating enzyme 1</fullName>
        <ecNumber evidence="1">6.2.1.45</ecNumber>
    </recommendedName>
    <alternativeName>
        <fullName>Ubiquitin-activating enzyme E1</fullName>
    </alternativeName>
    <alternativeName>
        <fullName>Ubiquitin-activating enzyme E1 X</fullName>
    </alternativeName>
    <alternativeName>
        <fullName>Ubiquitin-like modifier-activating enzyme 1 X</fullName>
    </alternativeName>
</protein>
<comment type="function">
    <text evidence="1 8">Catalyzes the first step in ubiquitin conjugation to mark cellular proteins for degradation through the ubiquitin-proteasome system (PubMed:1511901). Activates ubiquitin by first adenylating its C-terminal glycine residue with ATP, and thereafter linking this residue to the side chain of a cysteine residue in E1, yielding a ubiquitin-E1 thioester and free AMP. Essential for the formation of radiation-induced foci, timely DNA repair and for response to replication stress. Promotes the recruitment of TP53BP1 and BRCA1 at DNA damage sites.</text>
</comment>
<comment type="catalytic activity">
    <reaction evidence="1">
        <text>ATP + ubiquitin + [E1 ubiquitin-activating enzyme]-L-cysteine = AMP + diphosphate + S-ubiquitinyl-[E1 ubiquitin-activating enzyme]-L-cysteine.</text>
        <dbReference type="EC" id="6.2.1.45"/>
    </reaction>
</comment>
<comment type="pathway">
    <text evidence="8">Protein modification; protein ubiquitination.</text>
</comment>
<comment type="subunit">
    <text>Monomer. Interacts with GAN (via BTB domain).</text>
</comment>
<comment type="subcellular location">
    <subcellularLocation>
        <location evidence="1">Cytoplasm</location>
    </subcellularLocation>
    <subcellularLocation>
        <location evidence="1">Mitochondrion</location>
    </subcellularLocation>
    <subcellularLocation>
        <location evidence="1">Nucleus</location>
    </subcellularLocation>
</comment>
<comment type="tissue specificity">
    <text evidence="6">Ubiquitously expressed. In testis, expressed in A spermatogonia and spermatids but at very low levels in pachytene spermatocytes.</text>
</comment>
<comment type="developmental stage">
    <text evidence="6">In testis, highly expressed from 14.5 days post coitum (dpc) until the day of birth, with levels falling after 10 days post partum (dpp) but peaking again at 28 dpp.</text>
</comment>
<comment type="induction">
    <text>May be modulated by the thyroid hormone receptor.</text>
</comment>
<comment type="PTM">
    <text evidence="5">ISGylated.</text>
</comment>
<comment type="miscellaneous">
    <text evidence="2">There are two active sites within the E1 molecule, allowing it to accommodate two ubiquitin moieties at a time, with a new ubiquitin forming an adenylate intermediate as the previous one is transferred to the thiol site.</text>
</comment>
<comment type="similarity">
    <text evidence="7">Belongs to the ubiquitin-activating E1 family.</text>
</comment>
<comment type="sequence caution" evidence="7">
    <conflict type="frameshift">
        <sequence resource="EMBL-CDS" id="CAA44465"/>
    </conflict>
</comment>
<feature type="initiator methionine" description="Removed" evidence="1">
    <location>
        <position position="1"/>
    </location>
</feature>
<feature type="chain" id="PRO_0000194935" description="Ubiquitin-like modifier-activating enzyme 1">
    <location>
        <begin position="2"/>
        <end position="1058"/>
    </location>
</feature>
<feature type="repeat" description="1-1">
    <location>
        <begin position="63"/>
        <end position="199"/>
    </location>
</feature>
<feature type="repeat" description="1-2">
    <location>
        <begin position="459"/>
        <end position="611"/>
    </location>
</feature>
<feature type="region of interest" description="Disordered" evidence="4">
    <location>
        <begin position="1"/>
        <end position="46"/>
    </location>
</feature>
<feature type="region of interest" description="2 approximate repeats">
    <location>
        <begin position="63"/>
        <end position="611"/>
    </location>
</feature>
<feature type="compositionally biased region" description="Polar residues" evidence="4">
    <location>
        <begin position="21"/>
        <end position="38"/>
    </location>
</feature>
<feature type="active site" description="Glycyl thioester intermediate" evidence="3">
    <location>
        <position position="632"/>
    </location>
</feature>
<feature type="binding site" evidence="2">
    <location>
        <position position="478"/>
    </location>
    <ligand>
        <name>ATP</name>
        <dbReference type="ChEBI" id="CHEBI:30616"/>
    </ligand>
</feature>
<feature type="binding site" evidence="2">
    <location>
        <position position="504"/>
    </location>
    <ligand>
        <name>ATP</name>
        <dbReference type="ChEBI" id="CHEBI:30616"/>
    </ligand>
</feature>
<feature type="binding site" evidence="2">
    <location>
        <position position="515"/>
    </location>
    <ligand>
        <name>ATP</name>
        <dbReference type="ChEBI" id="CHEBI:30616"/>
    </ligand>
</feature>
<feature type="binding site" evidence="2">
    <location>
        <position position="528"/>
    </location>
    <ligand>
        <name>ATP</name>
        <dbReference type="ChEBI" id="CHEBI:30616"/>
    </ligand>
</feature>
<feature type="binding site" evidence="2">
    <location>
        <begin position="576"/>
        <end position="577"/>
    </location>
    <ligand>
        <name>ATP</name>
        <dbReference type="ChEBI" id="CHEBI:30616"/>
    </ligand>
</feature>
<feature type="modified residue" description="N-acetylserine" evidence="1">
    <location>
        <position position="2"/>
    </location>
</feature>
<feature type="modified residue" description="Phosphoserine" evidence="1">
    <location>
        <position position="4"/>
    </location>
</feature>
<feature type="modified residue" description="Phosphoserine" evidence="11">
    <location>
        <position position="13"/>
    </location>
</feature>
<feature type="modified residue" description="Phosphoserine" evidence="11">
    <location>
        <position position="21"/>
    </location>
</feature>
<feature type="modified residue" description="Phosphoserine" evidence="11">
    <location>
        <position position="24"/>
    </location>
</feature>
<feature type="modified residue" description="Phosphoserine" evidence="11">
    <location>
        <position position="46"/>
    </location>
</feature>
<feature type="modified residue" description="Phosphotyrosine" evidence="10">
    <location>
        <position position="55"/>
    </location>
</feature>
<feature type="modified residue" description="N6-succinyllysine" evidence="12">
    <location>
        <position position="528"/>
    </location>
</feature>
<feature type="modified residue" description="N6-acetyllysine" evidence="12">
    <location>
        <position position="671"/>
    </location>
</feature>
<feature type="modified residue" description="Phosphothreonine" evidence="1">
    <location>
        <position position="800"/>
    </location>
</feature>
<feature type="modified residue" description="Phosphoserine" evidence="11">
    <location>
        <position position="810"/>
    </location>
</feature>
<feature type="modified residue" description="Phosphoserine" evidence="9 11">
    <location>
        <position position="816"/>
    </location>
</feature>
<feature type="modified residue" description="Phosphoserine" evidence="9 11">
    <location>
        <position position="820"/>
    </location>
</feature>
<feature type="modified residue" description="Phosphoserine" evidence="11">
    <location>
        <position position="835"/>
    </location>
</feature>
<feature type="modified residue" description="N6-acetyllysine" evidence="1">
    <location>
        <position position="980"/>
    </location>
</feature>
<feature type="sequence conflict" description="In Ref. 6; CAA44465." evidence="7" ref="6">
    <original>L</original>
    <variation>V</variation>
    <location>
        <position position="963"/>
    </location>
</feature>
<feature type="turn" evidence="14">
    <location>
        <begin position="203"/>
        <end position="205"/>
    </location>
</feature>
<feature type="strand" evidence="14">
    <location>
        <begin position="218"/>
        <end position="225"/>
    </location>
</feature>
<feature type="strand" evidence="14">
    <location>
        <begin position="227"/>
        <end position="234"/>
    </location>
</feature>
<feature type="strand" evidence="14">
    <location>
        <begin position="246"/>
        <end position="255"/>
    </location>
</feature>
<feature type="helix" evidence="14">
    <location>
        <begin position="257"/>
        <end position="260"/>
    </location>
</feature>
<feature type="strand" evidence="14">
    <location>
        <begin position="265"/>
        <end position="278"/>
    </location>
</feature>
<feature type="helix" evidence="14">
    <location>
        <begin position="280"/>
        <end position="282"/>
    </location>
</feature>
<feature type="strand" evidence="14">
    <location>
        <begin position="288"/>
        <end position="294"/>
    </location>
</feature>
<feature type="helix" evidence="13">
    <location>
        <begin position="631"/>
        <end position="635"/>
    </location>
</feature>
<feature type="helix" evidence="13">
    <location>
        <begin position="641"/>
        <end position="656"/>
    </location>
</feature>
<feature type="helix" evidence="13">
    <location>
        <begin position="658"/>
        <end position="666"/>
    </location>
</feature>
<feature type="helix" evidence="13">
    <location>
        <begin position="671"/>
        <end position="677"/>
    </location>
</feature>
<feature type="helix" evidence="13">
    <location>
        <begin position="683"/>
        <end position="695"/>
    </location>
</feature>
<feature type="turn" evidence="13">
    <location>
        <begin position="696"/>
        <end position="698"/>
    </location>
</feature>
<feature type="helix" evidence="13">
    <location>
        <begin position="703"/>
        <end position="718"/>
    </location>
</feature>
<feature type="helix" evidence="13">
    <location>
        <begin position="720"/>
        <end position="728"/>
    </location>
</feature>
<feature type="strand" evidence="13">
    <location>
        <begin position="740"/>
        <end position="742"/>
    </location>
</feature>
<feature type="helix" evidence="13">
    <location>
        <begin position="759"/>
        <end position="775"/>
    </location>
</feature>
<feature type="helix" evidence="13">
    <location>
        <begin position="784"/>
        <end position="792"/>
    </location>
</feature>
<feature type="strand" evidence="13">
    <location>
        <begin position="809"/>
        <end position="811"/>
    </location>
</feature>
<feature type="helix" evidence="13">
    <location>
        <begin position="824"/>
        <end position="832"/>
    </location>
</feature>
<feature type="helix" evidence="13">
    <location>
        <begin position="836"/>
        <end position="838"/>
    </location>
</feature>
<feature type="helix" evidence="13">
    <location>
        <begin position="858"/>
        <end position="872"/>
    </location>
</feature>
<feature type="helix" evidence="13">
    <location>
        <begin position="880"/>
        <end position="886"/>
    </location>
</feature>
<reference key="1">
    <citation type="journal article" date="1992" name="Gene">
        <title>Cloning and sequence of a functionally active cDNA encoding the mouse ubiquitin-activating enzyme E1.</title>
        <authorList>
            <person name="Imai N."/>
            <person name="Kaneda S."/>
            <person name="Nagai Y."/>
            <person name="Seno T."/>
            <person name="Ayusawa D."/>
            <person name="Hanaoka F."/>
            <person name="Yamao F."/>
        </authorList>
    </citation>
    <scope>NUCLEOTIDE SEQUENCE [MRNA]</scope>
    <scope>FUNCTION</scope>
    <scope>PATHWAY</scope>
</reference>
<reference key="2">
    <citation type="journal article" date="2005" name="Science">
        <title>The transcriptional landscape of the mammalian genome.</title>
        <authorList>
            <person name="Carninci P."/>
            <person name="Kasukawa T."/>
            <person name="Katayama S."/>
            <person name="Gough J."/>
            <person name="Frith M.C."/>
            <person name="Maeda N."/>
            <person name="Oyama R."/>
            <person name="Ravasi T."/>
            <person name="Lenhard B."/>
            <person name="Wells C."/>
            <person name="Kodzius R."/>
            <person name="Shimokawa K."/>
            <person name="Bajic V.B."/>
            <person name="Brenner S.E."/>
            <person name="Batalov S."/>
            <person name="Forrest A.R."/>
            <person name="Zavolan M."/>
            <person name="Davis M.J."/>
            <person name="Wilming L.G."/>
            <person name="Aidinis V."/>
            <person name="Allen J.E."/>
            <person name="Ambesi-Impiombato A."/>
            <person name="Apweiler R."/>
            <person name="Aturaliya R.N."/>
            <person name="Bailey T.L."/>
            <person name="Bansal M."/>
            <person name="Baxter L."/>
            <person name="Beisel K.W."/>
            <person name="Bersano T."/>
            <person name="Bono H."/>
            <person name="Chalk A.M."/>
            <person name="Chiu K.P."/>
            <person name="Choudhary V."/>
            <person name="Christoffels A."/>
            <person name="Clutterbuck D.R."/>
            <person name="Crowe M.L."/>
            <person name="Dalla E."/>
            <person name="Dalrymple B.P."/>
            <person name="de Bono B."/>
            <person name="Della Gatta G."/>
            <person name="di Bernardo D."/>
            <person name="Down T."/>
            <person name="Engstrom P."/>
            <person name="Fagiolini M."/>
            <person name="Faulkner G."/>
            <person name="Fletcher C.F."/>
            <person name="Fukushima T."/>
            <person name="Furuno M."/>
            <person name="Futaki S."/>
            <person name="Gariboldi M."/>
            <person name="Georgii-Hemming P."/>
            <person name="Gingeras T.R."/>
            <person name="Gojobori T."/>
            <person name="Green R.E."/>
            <person name="Gustincich S."/>
            <person name="Harbers M."/>
            <person name="Hayashi Y."/>
            <person name="Hensch T.K."/>
            <person name="Hirokawa N."/>
            <person name="Hill D."/>
            <person name="Huminiecki L."/>
            <person name="Iacono M."/>
            <person name="Ikeo K."/>
            <person name="Iwama A."/>
            <person name="Ishikawa T."/>
            <person name="Jakt M."/>
            <person name="Kanapin A."/>
            <person name="Katoh M."/>
            <person name="Kawasawa Y."/>
            <person name="Kelso J."/>
            <person name="Kitamura H."/>
            <person name="Kitano H."/>
            <person name="Kollias G."/>
            <person name="Krishnan S.P."/>
            <person name="Kruger A."/>
            <person name="Kummerfeld S.K."/>
            <person name="Kurochkin I.V."/>
            <person name="Lareau L.F."/>
            <person name="Lazarevic D."/>
            <person name="Lipovich L."/>
            <person name="Liu J."/>
            <person name="Liuni S."/>
            <person name="McWilliam S."/>
            <person name="Madan Babu M."/>
            <person name="Madera M."/>
            <person name="Marchionni L."/>
            <person name="Matsuda H."/>
            <person name="Matsuzawa S."/>
            <person name="Miki H."/>
            <person name="Mignone F."/>
            <person name="Miyake S."/>
            <person name="Morris K."/>
            <person name="Mottagui-Tabar S."/>
            <person name="Mulder N."/>
            <person name="Nakano N."/>
            <person name="Nakauchi H."/>
            <person name="Ng P."/>
            <person name="Nilsson R."/>
            <person name="Nishiguchi S."/>
            <person name="Nishikawa S."/>
            <person name="Nori F."/>
            <person name="Ohara O."/>
            <person name="Okazaki Y."/>
            <person name="Orlando V."/>
            <person name="Pang K.C."/>
            <person name="Pavan W.J."/>
            <person name="Pavesi G."/>
            <person name="Pesole G."/>
            <person name="Petrovsky N."/>
            <person name="Piazza S."/>
            <person name="Reed J."/>
            <person name="Reid J.F."/>
            <person name="Ring B.Z."/>
            <person name="Ringwald M."/>
            <person name="Rost B."/>
            <person name="Ruan Y."/>
            <person name="Salzberg S.L."/>
            <person name="Sandelin A."/>
            <person name="Schneider C."/>
            <person name="Schoenbach C."/>
            <person name="Sekiguchi K."/>
            <person name="Semple C.A."/>
            <person name="Seno S."/>
            <person name="Sessa L."/>
            <person name="Sheng Y."/>
            <person name="Shibata Y."/>
            <person name="Shimada H."/>
            <person name="Shimada K."/>
            <person name="Silva D."/>
            <person name="Sinclair B."/>
            <person name="Sperling S."/>
            <person name="Stupka E."/>
            <person name="Sugiura K."/>
            <person name="Sultana R."/>
            <person name="Takenaka Y."/>
            <person name="Taki K."/>
            <person name="Tammoja K."/>
            <person name="Tan S.L."/>
            <person name="Tang S."/>
            <person name="Taylor M.S."/>
            <person name="Tegner J."/>
            <person name="Teichmann S.A."/>
            <person name="Ueda H.R."/>
            <person name="van Nimwegen E."/>
            <person name="Verardo R."/>
            <person name="Wei C.L."/>
            <person name="Yagi K."/>
            <person name="Yamanishi H."/>
            <person name="Zabarovsky E."/>
            <person name="Zhu S."/>
            <person name="Zimmer A."/>
            <person name="Hide W."/>
            <person name="Bult C."/>
            <person name="Grimmond S.M."/>
            <person name="Teasdale R.D."/>
            <person name="Liu E.T."/>
            <person name="Brusic V."/>
            <person name="Quackenbush J."/>
            <person name="Wahlestedt C."/>
            <person name="Mattick J.S."/>
            <person name="Hume D.A."/>
            <person name="Kai C."/>
            <person name="Sasaki D."/>
            <person name="Tomaru Y."/>
            <person name="Fukuda S."/>
            <person name="Kanamori-Katayama M."/>
            <person name="Suzuki M."/>
            <person name="Aoki J."/>
            <person name="Arakawa T."/>
            <person name="Iida J."/>
            <person name="Imamura K."/>
            <person name="Itoh M."/>
            <person name="Kato T."/>
            <person name="Kawaji H."/>
            <person name="Kawagashira N."/>
            <person name="Kawashima T."/>
            <person name="Kojima M."/>
            <person name="Kondo S."/>
            <person name="Konno H."/>
            <person name="Nakano K."/>
            <person name="Ninomiya N."/>
            <person name="Nishio T."/>
            <person name="Okada M."/>
            <person name="Plessy C."/>
            <person name="Shibata K."/>
            <person name="Shiraki T."/>
            <person name="Suzuki S."/>
            <person name="Tagami M."/>
            <person name="Waki K."/>
            <person name="Watahiki A."/>
            <person name="Okamura-Oho Y."/>
            <person name="Suzuki H."/>
            <person name="Kawai J."/>
            <person name="Hayashizaki Y."/>
        </authorList>
    </citation>
    <scope>NUCLEOTIDE SEQUENCE [LARGE SCALE MRNA]</scope>
    <source>
        <strain>C57BL/6J</strain>
        <strain>NOD</strain>
        <tissue>Ovary</tissue>
        <tissue>Thymus</tissue>
    </source>
</reference>
<reference key="3">
    <citation type="journal article" date="2009" name="PLoS Biol.">
        <title>Lineage-specific biology revealed by a finished genome assembly of the mouse.</title>
        <authorList>
            <person name="Church D.M."/>
            <person name="Goodstadt L."/>
            <person name="Hillier L.W."/>
            <person name="Zody M.C."/>
            <person name="Goldstein S."/>
            <person name="She X."/>
            <person name="Bult C.J."/>
            <person name="Agarwala R."/>
            <person name="Cherry J.L."/>
            <person name="DiCuccio M."/>
            <person name="Hlavina W."/>
            <person name="Kapustin Y."/>
            <person name="Meric P."/>
            <person name="Maglott D."/>
            <person name="Birtle Z."/>
            <person name="Marques A.C."/>
            <person name="Graves T."/>
            <person name="Zhou S."/>
            <person name="Teague B."/>
            <person name="Potamousis K."/>
            <person name="Churas C."/>
            <person name="Place M."/>
            <person name="Herschleb J."/>
            <person name="Runnheim R."/>
            <person name="Forrest D."/>
            <person name="Amos-Landgraf J."/>
            <person name="Schwartz D.C."/>
            <person name="Cheng Z."/>
            <person name="Lindblad-Toh K."/>
            <person name="Eichler E.E."/>
            <person name="Ponting C.P."/>
        </authorList>
    </citation>
    <scope>NUCLEOTIDE SEQUENCE [LARGE SCALE GENOMIC DNA]</scope>
    <source>
        <strain>C57BL/6J</strain>
    </source>
</reference>
<reference key="4">
    <citation type="journal article" date="2004" name="Genome Res.">
        <title>The status, quality, and expansion of the NIH full-length cDNA project: the Mammalian Gene Collection (MGC).</title>
        <authorList>
            <consortium name="The MGC Project Team"/>
        </authorList>
    </citation>
    <scope>NUCLEOTIDE SEQUENCE [LARGE SCALE MRNA]</scope>
    <source>
        <strain>C57BL/6J</strain>
        <tissue>Brain</tissue>
    </source>
</reference>
<reference key="5">
    <citation type="submission" date="2007-04" db="UniProtKB">
        <authorList>
            <person name="Lubec G."/>
            <person name="Klug S."/>
            <person name="Kang S.U."/>
        </authorList>
    </citation>
    <scope>PROTEIN SEQUENCE OF 69-81; 90-97; 175-182; 227-239; 351-368; 375-384; 386-411; 451-465; 471-485; 538-551; 559-581; 593-604; 636-671; 679-693; 785-802; 844-851; 870-880; 890-923; 945-980 AND 1011-1021</scope>
    <scope>IDENTIFICATION BY MASS SPECTROMETRY</scope>
    <source>
        <strain>C57BL/6J</strain>
        <tissue>Brain</tissue>
        <tissue>Hippocampus</tissue>
    </source>
</reference>
<reference key="6">
    <citation type="journal article" date="1991" name="Nature">
        <title>Homology of a candidate spermatogenic gene from the mouse Y chromosome to the ubiquitin-activating enzyme E1.</title>
        <authorList>
            <person name="Mitchell M.J."/>
            <person name="Woods D.R."/>
            <person name="Tucker P.K."/>
            <person name="Opp J.S."/>
            <person name="Bishop C.E."/>
        </authorList>
    </citation>
    <scope>NUCLEOTIDE SEQUENCE [MRNA] OF 615-1058</scope>
    <source>
        <strain>129/Sv</strain>
    </source>
</reference>
<reference key="7">
    <citation type="journal article" date="1995" name="J. Mol. Evol.">
        <title>Estimating the intensity of male-driven evolution in rodents by using X-linked and Y-linked Ube 1 genes and pseudogenes.</title>
        <authorList>
            <person name="Chang B.H.-J."/>
            <person name="Li W.H."/>
        </authorList>
    </citation>
    <scope>NUCLEOTIDE SEQUENCE [GENOMIC DNA] OF 655-763</scope>
    <source>
        <strain>BALB/c AnCr</strain>
        <tissue>Liver</tissue>
    </source>
</reference>
<reference key="8">
    <citation type="journal article" date="1994" name="Nucleic Acids Res.">
        <title>Isolation of genomic DNA fragments corresponding to genes modulated in vivo by a transcription factor.</title>
        <authorList>
            <person name="Caubin J."/>
            <person name="Iglesias T."/>
            <person name="Bernal J."/>
            <person name="Munoz A."/>
            <person name="Marquez G."/>
            <person name="Barbero J.L."/>
            <person name="Zaballos A."/>
        </authorList>
    </citation>
    <scope>REGULATION OF EXPRESSION BY THE THYROID HORMONE RECEPTOR</scope>
</reference>
<reference key="9">
    <citation type="journal article" date="1996" name="Dev. Biol.">
        <title>Transcriptional analysis of the candidate spermatogenesis gene Ube1y and of the closely related Ube1x shows that they are coexpressed in spermatogonia and spermatids but are repressed in pachytene spermatocytes.</title>
        <authorList>
            <person name="Odorisio T."/>
            <person name="Mahadevaiah S.K."/>
            <person name="McCarrey J.R."/>
            <person name="Burgoyne P.S."/>
        </authorList>
    </citation>
    <scope>TISSUE SPECIFICITY</scope>
    <scope>DEVELOPMENTAL STAGE</scope>
</reference>
<reference key="10">
    <citation type="journal article" date="2005" name="Biochem. Biophys. Res. Commun.">
        <title>Proteomic identification of proteins conjugated to ISG15 in mouse and human cells.</title>
        <authorList>
            <person name="Giannakopoulos N.V."/>
            <person name="Luo J.K."/>
            <person name="Papov V."/>
            <person name="Zou W."/>
            <person name="Lenschow D.J."/>
            <person name="Jacobs B.S."/>
            <person name="Borden E.C."/>
            <person name="Li J."/>
            <person name="Virgin H.W."/>
            <person name="Zhang D.E."/>
        </authorList>
    </citation>
    <scope>ISGYLATION</scope>
</reference>
<reference key="11">
    <citation type="journal article" date="2007" name="J. Immunol.">
        <title>Quantitative time-resolved phosphoproteomic analysis of mast cell signaling.</title>
        <authorList>
            <person name="Cao L."/>
            <person name="Yu K."/>
            <person name="Banh C."/>
            <person name="Nguyen V."/>
            <person name="Ritz A."/>
            <person name="Raphael B.J."/>
            <person name="Kawakami Y."/>
            <person name="Kawakami T."/>
            <person name="Salomon A.R."/>
        </authorList>
    </citation>
    <scope>PHOSPHORYLATION [LARGE SCALE ANALYSIS] AT TYR-55</scope>
    <scope>IDENTIFICATION BY MASS SPECTROMETRY [LARGE SCALE ANALYSIS]</scope>
    <source>
        <tissue>Mast cell</tissue>
    </source>
</reference>
<reference key="12">
    <citation type="journal article" date="2007" name="Proc. Natl. Acad. Sci. U.S.A.">
        <title>Large-scale phosphorylation analysis of mouse liver.</title>
        <authorList>
            <person name="Villen J."/>
            <person name="Beausoleil S.A."/>
            <person name="Gerber S.A."/>
            <person name="Gygi S.P."/>
        </authorList>
    </citation>
    <scope>PHOSPHORYLATION [LARGE SCALE ANALYSIS] AT SER-816 AND SER-820</scope>
    <scope>IDENTIFICATION BY MASS SPECTROMETRY [LARGE SCALE ANALYSIS]</scope>
    <source>
        <tissue>Liver</tissue>
    </source>
</reference>
<reference key="13">
    <citation type="journal article" date="2010" name="Cell">
        <title>A tissue-specific atlas of mouse protein phosphorylation and expression.</title>
        <authorList>
            <person name="Huttlin E.L."/>
            <person name="Jedrychowski M.P."/>
            <person name="Elias J.E."/>
            <person name="Goswami T."/>
            <person name="Rad R."/>
            <person name="Beausoleil S.A."/>
            <person name="Villen J."/>
            <person name="Haas W."/>
            <person name="Sowa M.E."/>
            <person name="Gygi S.P."/>
        </authorList>
    </citation>
    <scope>PHOSPHORYLATION [LARGE SCALE ANALYSIS] AT SER-13; SER-21; SER-24; SER-46; SER-810; SER-816; SER-820 AND SER-835</scope>
    <scope>IDENTIFICATION BY MASS SPECTROMETRY [LARGE SCALE ANALYSIS]</scope>
    <source>
        <tissue>Brain</tissue>
        <tissue>Brown adipose tissue</tissue>
        <tissue>Heart</tissue>
        <tissue>Kidney</tissue>
        <tissue>Liver</tissue>
        <tissue>Lung</tissue>
        <tissue>Pancreas</tissue>
        <tissue>Spleen</tissue>
        <tissue>Testis</tissue>
    </source>
</reference>
<reference key="14">
    <citation type="journal article" date="2013" name="Mol. Cell">
        <title>SIRT5-mediated lysine desuccinylation impacts diverse metabolic pathways.</title>
        <authorList>
            <person name="Park J."/>
            <person name="Chen Y."/>
            <person name="Tishkoff D.X."/>
            <person name="Peng C."/>
            <person name="Tan M."/>
            <person name="Dai L."/>
            <person name="Xie Z."/>
            <person name="Zhang Y."/>
            <person name="Zwaans B.M."/>
            <person name="Skinner M.E."/>
            <person name="Lombard D.B."/>
            <person name="Zhao Y."/>
        </authorList>
    </citation>
    <scope>ACETYLATION [LARGE SCALE ANALYSIS] AT LYS-671</scope>
    <scope>SUCCINYLATION [LARGE SCALE ANALYSIS] AT LYS-528</scope>
    <scope>IDENTIFICATION BY MASS SPECTROMETRY [LARGE SCALE ANALYSIS]</scope>
    <source>
        <tissue>Embryonic fibroblast</tissue>
    </source>
</reference>
<reference key="15">
    <citation type="journal article" date="2005" name="J. Biol. Chem.">
        <title>Crystal structure of a fragment of mouse ubiquitin-activating enzyme.</title>
        <authorList>
            <person name="Szczepanowski R.H."/>
            <person name="Filipek R."/>
            <person name="Bochtler M."/>
        </authorList>
    </citation>
    <scope>X-RAY CRYSTALLOGRAPHY (2.8 ANGSTROMS) OF 626-891</scope>
</reference>